<feature type="chain" id="PRO_1000123731" description="Tetraacyldisaccharide 4'-kinase">
    <location>
        <begin position="1"/>
        <end position="347"/>
    </location>
</feature>
<feature type="binding site" evidence="1">
    <location>
        <begin position="54"/>
        <end position="61"/>
    </location>
    <ligand>
        <name>ATP</name>
        <dbReference type="ChEBI" id="CHEBI:30616"/>
    </ligand>
</feature>
<organism>
    <name type="scientific">Rhizobium etli (strain CIAT 652)</name>
    <dbReference type="NCBI Taxonomy" id="491916"/>
    <lineage>
        <taxon>Bacteria</taxon>
        <taxon>Pseudomonadati</taxon>
        <taxon>Pseudomonadota</taxon>
        <taxon>Alphaproteobacteria</taxon>
        <taxon>Hyphomicrobiales</taxon>
        <taxon>Rhizobiaceae</taxon>
        <taxon>Rhizobium/Agrobacterium group</taxon>
        <taxon>Rhizobium</taxon>
    </lineage>
</organism>
<keyword id="KW-0067">ATP-binding</keyword>
<keyword id="KW-0418">Kinase</keyword>
<keyword id="KW-0441">Lipid A biosynthesis</keyword>
<keyword id="KW-0444">Lipid biosynthesis</keyword>
<keyword id="KW-0443">Lipid metabolism</keyword>
<keyword id="KW-0547">Nucleotide-binding</keyword>
<keyword id="KW-0808">Transferase</keyword>
<protein>
    <recommendedName>
        <fullName evidence="1">Tetraacyldisaccharide 4'-kinase</fullName>
        <ecNumber evidence="1">2.7.1.130</ecNumber>
    </recommendedName>
    <alternativeName>
        <fullName evidence="1">Lipid A 4'-kinase</fullName>
    </alternativeName>
</protein>
<name>LPXK_RHIE6</name>
<proteinExistence type="inferred from homology"/>
<gene>
    <name evidence="1" type="primary">lpxK</name>
    <name type="ordered locus">RHECIAT_CH0000934</name>
</gene>
<reference key="1">
    <citation type="journal article" date="2010" name="Appl. Environ. Microbiol.">
        <title>Conserved symbiotic plasmid DNA sequences in the multireplicon pangenomic structure of Rhizobium etli.</title>
        <authorList>
            <person name="Gonzalez V."/>
            <person name="Acosta J.L."/>
            <person name="Santamaria R.I."/>
            <person name="Bustos P."/>
            <person name="Fernandez J.L."/>
            <person name="Hernandez Gonzalez I.L."/>
            <person name="Diaz R."/>
            <person name="Flores M."/>
            <person name="Palacios R."/>
            <person name="Mora J."/>
            <person name="Davila G."/>
        </authorList>
    </citation>
    <scope>NUCLEOTIDE SEQUENCE [LARGE SCALE GENOMIC DNA]</scope>
    <source>
        <strain>CIAT 652</strain>
    </source>
</reference>
<comment type="function">
    <text evidence="1">Transfers the gamma-phosphate of ATP to the 4'-position of a tetraacyldisaccharide 1-phosphate intermediate (termed DS-1-P) to form tetraacyldisaccharide 1,4'-bis-phosphate (lipid IVA).</text>
</comment>
<comment type="catalytic activity">
    <reaction evidence="1">
        <text>a lipid A disaccharide + ATP = a lipid IVA + ADP + H(+)</text>
        <dbReference type="Rhea" id="RHEA:67840"/>
        <dbReference type="ChEBI" id="CHEBI:15378"/>
        <dbReference type="ChEBI" id="CHEBI:30616"/>
        <dbReference type="ChEBI" id="CHEBI:176343"/>
        <dbReference type="ChEBI" id="CHEBI:176425"/>
        <dbReference type="ChEBI" id="CHEBI:456216"/>
        <dbReference type="EC" id="2.7.1.130"/>
    </reaction>
</comment>
<comment type="pathway">
    <text evidence="1">Glycolipid biosynthesis; lipid IV(A) biosynthesis; lipid IV(A) from (3R)-3-hydroxytetradecanoyl-[acyl-carrier-protein] and UDP-N-acetyl-alpha-D-glucosamine: step 6/6.</text>
</comment>
<comment type="similarity">
    <text evidence="1">Belongs to the LpxK family.</text>
</comment>
<evidence type="ECO:0000255" key="1">
    <source>
        <dbReference type="HAMAP-Rule" id="MF_00409"/>
    </source>
</evidence>
<accession>B3PRD6</accession>
<dbReference type="EC" id="2.7.1.130" evidence="1"/>
<dbReference type="EMBL" id="CP001074">
    <property type="protein sequence ID" value="ACE89919.1"/>
    <property type="molecule type" value="Genomic_DNA"/>
</dbReference>
<dbReference type="SMR" id="B3PRD6"/>
<dbReference type="KEGG" id="rec:RHECIAT_CH0000934"/>
<dbReference type="eggNOG" id="COG1663">
    <property type="taxonomic scope" value="Bacteria"/>
</dbReference>
<dbReference type="HOGENOM" id="CLU_038816_0_0_5"/>
<dbReference type="UniPathway" id="UPA00359">
    <property type="reaction ID" value="UER00482"/>
</dbReference>
<dbReference type="Proteomes" id="UP000008817">
    <property type="component" value="Chromosome"/>
</dbReference>
<dbReference type="GO" id="GO:0005886">
    <property type="term" value="C:plasma membrane"/>
    <property type="evidence" value="ECO:0007669"/>
    <property type="project" value="TreeGrafter"/>
</dbReference>
<dbReference type="GO" id="GO:0005524">
    <property type="term" value="F:ATP binding"/>
    <property type="evidence" value="ECO:0007669"/>
    <property type="project" value="UniProtKB-UniRule"/>
</dbReference>
<dbReference type="GO" id="GO:0009029">
    <property type="term" value="F:tetraacyldisaccharide 4'-kinase activity"/>
    <property type="evidence" value="ECO:0007669"/>
    <property type="project" value="UniProtKB-UniRule"/>
</dbReference>
<dbReference type="GO" id="GO:0009245">
    <property type="term" value="P:lipid A biosynthetic process"/>
    <property type="evidence" value="ECO:0007669"/>
    <property type="project" value="UniProtKB-UniRule"/>
</dbReference>
<dbReference type="GO" id="GO:0009244">
    <property type="term" value="P:lipopolysaccharide core region biosynthetic process"/>
    <property type="evidence" value="ECO:0007669"/>
    <property type="project" value="TreeGrafter"/>
</dbReference>
<dbReference type="HAMAP" id="MF_00409">
    <property type="entry name" value="LpxK"/>
    <property type="match status" value="1"/>
</dbReference>
<dbReference type="InterPro" id="IPR003758">
    <property type="entry name" value="LpxK"/>
</dbReference>
<dbReference type="InterPro" id="IPR027417">
    <property type="entry name" value="P-loop_NTPase"/>
</dbReference>
<dbReference type="NCBIfam" id="TIGR00682">
    <property type="entry name" value="lpxK"/>
    <property type="match status" value="1"/>
</dbReference>
<dbReference type="PANTHER" id="PTHR42724">
    <property type="entry name" value="TETRAACYLDISACCHARIDE 4'-KINASE"/>
    <property type="match status" value="1"/>
</dbReference>
<dbReference type="PANTHER" id="PTHR42724:SF1">
    <property type="entry name" value="TETRAACYLDISACCHARIDE 4'-KINASE, MITOCHONDRIAL-RELATED"/>
    <property type="match status" value="1"/>
</dbReference>
<dbReference type="Pfam" id="PF02606">
    <property type="entry name" value="LpxK"/>
    <property type="match status" value="1"/>
</dbReference>
<dbReference type="SUPFAM" id="SSF52540">
    <property type="entry name" value="P-loop containing nucleoside triphosphate hydrolases"/>
    <property type="match status" value="1"/>
</dbReference>
<sequence length="347" mass="37536">MISEAPPFWWRKADWRAWMLAPLSFVYGRVAGHRMAHARRASVSIPVICVGNFTVGGAGKTPTALTIARAAKAKGLKPGFLSRGYGGSLDVTTVVDPHHHRAVAVGDEPLLLAQEALTVISRRRVDGAHRLVAEGADLIIMDDGFQSARLAIDYALLVIDATRGLGNGHIVPAGPVRAPIGQQLRSATALLKVGGGQAADRIVRMAARAAKPYFTASLKVRGDDRLTGIRVLAFAGIADPAKFFRTVESRGAEITVAKTFGDHEHLSEDEIGDILTTAERQDLLIVTTSKDFVRLSGHHGKAQELAQQCRVIEVDMVFDDHLAPGLIIDRAIVACRERRLREMKTKS</sequence>